<protein>
    <recommendedName>
        <fullName evidence="1">Phosphoserine aminotransferase</fullName>
        <ecNumber evidence="1">2.6.1.52</ecNumber>
    </recommendedName>
    <alternativeName>
        <fullName evidence="1">Phosphohydroxythreonine aminotransferase</fullName>
        <shortName evidence="1">PSAT</shortName>
    </alternativeName>
</protein>
<reference key="1">
    <citation type="submission" date="2006-08" db="EMBL/GenBank/DDBJ databases">
        <title>Complete sequence of chromosome 1 of Burkholderia cepacia AMMD.</title>
        <authorList>
            <person name="Copeland A."/>
            <person name="Lucas S."/>
            <person name="Lapidus A."/>
            <person name="Barry K."/>
            <person name="Detter J.C."/>
            <person name="Glavina del Rio T."/>
            <person name="Hammon N."/>
            <person name="Israni S."/>
            <person name="Pitluck S."/>
            <person name="Bruce D."/>
            <person name="Chain P."/>
            <person name="Malfatti S."/>
            <person name="Shin M."/>
            <person name="Vergez L."/>
            <person name="Schmutz J."/>
            <person name="Larimer F."/>
            <person name="Land M."/>
            <person name="Hauser L."/>
            <person name="Kyrpides N."/>
            <person name="Kim E."/>
            <person name="Parke J."/>
            <person name="Coenye T."/>
            <person name="Konstantinidis K."/>
            <person name="Ramette A."/>
            <person name="Tiedje J."/>
            <person name="Richardson P."/>
        </authorList>
    </citation>
    <scope>NUCLEOTIDE SEQUENCE [LARGE SCALE GENOMIC DNA]</scope>
    <source>
        <strain>ATCC BAA-244 / DSM 16087 / CCUG 44356 / LMG 19182 / AMMD</strain>
    </source>
</reference>
<feature type="chain" id="PRO_1000058204" description="Phosphoserine aminotransferase">
    <location>
        <begin position="1"/>
        <end position="360"/>
    </location>
</feature>
<feature type="binding site" evidence="1">
    <location>
        <position position="41"/>
    </location>
    <ligand>
        <name>L-glutamate</name>
        <dbReference type="ChEBI" id="CHEBI:29985"/>
    </ligand>
</feature>
<feature type="binding site" evidence="1">
    <location>
        <position position="101"/>
    </location>
    <ligand>
        <name>pyridoxal 5'-phosphate</name>
        <dbReference type="ChEBI" id="CHEBI:597326"/>
    </ligand>
</feature>
<feature type="binding site" evidence="1">
    <location>
        <position position="152"/>
    </location>
    <ligand>
        <name>pyridoxal 5'-phosphate</name>
        <dbReference type="ChEBI" id="CHEBI:597326"/>
    </ligand>
</feature>
<feature type="binding site" evidence="1">
    <location>
        <position position="172"/>
    </location>
    <ligand>
        <name>pyridoxal 5'-phosphate</name>
        <dbReference type="ChEBI" id="CHEBI:597326"/>
    </ligand>
</feature>
<feature type="binding site" evidence="1">
    <location>
        <position position="195"/>
    </location>
    <ligand>
        <name>pyridoxal 5'-phosphate</name>
        <dbReference type="ChEBI" id="CHEBI:597326"/>
    </ligand>
</feature>
<feature type="binding site" evidence="1">
    <location>
        <begin position="237"/>
        <end position="238"/>
    </location>
    <ligand>
        <name>pyridoxal 5'-phosphate</name>
        <dbReference type="ChEBI" id="CHEBI:597326"/>
    </ligand>
</feature>
<feature type="modified residue" description="N6-(pyridoxal phosphate)lysine" evidence="1">
    <location>
        <position position="196"/>
    </location>
</feature>
<organism>
    <name type="scientific">Burkholderia ambifaria (strain ATCC BAA-244 / DSM 16087 / CCUG 44356 / LMG 19182 / AMMD)</name>
    <name type="common">Burkholderia cepacia (strain AMMD)</name>
    <dbReference type="NCBI Taxonomy" id="339670"/>
    <lineage>
        <taxon>Bacteria</taxon>
        <taxon>Pseudomonadati</taxon>
        <taxon>Pseudomonadota</taxon>
        <taxon>Betaproteobacteria</taxon>
        <taxon>Burkholderiales</taxon>
        <taxon>Burkholderiaceae</taxon>
        <taxon>Burkholderia</taxon>
        <taxon>Burkholderia cepacia complex</taxon>
    </lineage>
</organism>
<name>SERC_BURCM</name>
<sequence length="360" mass="39354">MRVFNFSAGPAALPEEVLRQAADEMLDWHGSGMSVMEMSHRGKEFMSIHEAALADLRELLDVPASHRILFLQGGGIAENAIVPMNLLGSRQTADFVVTGSWSQKSFNEAKKYGTPHLAASGKTADGFTRAPARAEWQLSDDPAYVHLCTNETIDGVETFEIPDLGDIPLVADVSSHILSRPMDVAKYGVLFGGAQKNIGMAGVTVVIVREDLLDRALSICPSAFEWKTVAANNSLYNTPPTYAIYIAGLVFQWLKRQGGLEAIEARNIEKAKLLYDTIDASGFYLNKVEPAVRSRMNVPFFLADETRNEDFLAGAKARGLLQLKGHKSVGGMRASIYNAVPLEGVKALVEYMKDFEQRGA</sequence>
<comment type="function">
    <text evidence="1">Catalyzes the reversible conversion of 3-phosphohydroxypyruvate to phosphoserine and of 3-hydroxy-2-oxo-4-phosphonooxybutanoate to phosphohydroxythreonine.</text>
</comment>
<comment type="catalytic activity">
    <reaction evidence="1">
        <text>O-phospho-L-serine + 2-oxoglutarate = 3-phosphooxypyruvate + L-glutamate</text>
        <dbReference type="Rhea" id="RHEA:14329"/>
        <dbReference type="ChEBI" id="CHEBI:16810"/>
        <dbReference type="ChEBI" id="CHEBI:18110"/>
        <dbReference type="ChEBI" id="CHEBI:29985"/>
        <dbReference type="ChEBI" id="CHEBI:57524"/>
        <dbReference type="EC" id="2.6.1.52"/>
    </reaction>
</comment>
<comment type="catalytic activity">
    <reaction evidence="1">
        <text>4-(phosphooxy)-L-threonine + 2-oxoglutarate = (R)-3-hydroxy-2-oxo-4-phosphooxybutanoate + L-glutamate</text>
        <dbReference type="Rhea" id="RHEA:16573"/>
        <dbReference type="ChEBI" id="CHEBI:16810"/>
        <dbReference type="ChEBI" id="CHEBI:29985"/>
        <dbReference type="ChEBI" id="CHEBI:58452"/>
        <dbReference type="ChEBI" id="CHEBI:58538"/>
        <dbReference type="EC" id="2.6.1.52"/>
    </reaction>
</comment>
<comment type="cofactor">
    <cofactor evidence="1">
        <name>pyridoxal 5'-phosphate</name>
        <dbReference type="ChEBI" id="CHEBI:597326"/>
    </cofactor>
    <text evidence="1">Binds 1 pyridoxal phosphate per subunit.</text>
</comment>
<comment type="pathway">
    <text evidence="1">Amino-acid biosynthesis; L-serine biosynthesis; L-serine from 3-phospho-D-glycerate: step 2/3.</text>
</comment>
<comment type="pathway">
    <text evidence="1">Cofactor biosynthesis; pyridoxine 5'-phosphate biosynthesis; pyridoxine 5'-phosphate from D-erythrose 4-phosphate: step 3/5.</text>
</comment>
<comment type="subunit">
    <text evidence="1">Homodimer.</text>
</comment>
<comment type="subcellular location">
    <subcellularLocation>
        <location evidence="1">Cytoplasm</location>
    </subcellularLocation>
</comment>
<comment type="similarity">
    <text evidence="1">Belongs to the class-V pyridoxal-phosphate-dependent aminotransferase family. SerC subfamily.</text>
</comment>
<evidence type="ECO:0000255" key="1">
    <source>
        <dbReference type="HAMAP-Rule" id="MF_00160"/>
    </source>
</evidence>
<dbReference type="EC" id="2.6.1.52" evidence="1"/>
<dbReference type="EMBL" id="CP000440">
    <property type="protein sequence ID" value="ABI86477.1"/>
    <property type="molecule type" value="Genomic_DNA"/>
</dbReference>
<dbReference type="RefSeq" id="WP_011656276.1">
    <property type="nucleotide sequence ID" value="NC_008390.1"/>
</dbReference>
<dbReference type="SMR" id="Q0BH96"/>
<dbReference type="GeneID" id="93083673"/>
<dbReference type="KEGG" id="bam:Bamb_0918"/>
<dbReference type="PATRIC" id="fig|339670.21.peg.657"/>
<dbReference type="eggNOG" id="COG1932">
    <property type="taxonomic scope" value="Bacteria"/>
</dbReference>
<dbReference type="UniPathway" id="UPA00135">
    <property type="reaction ID" value="UER00197"/>
</dbReference>
<dbReference type="UniPathway" id="UPA00244">
    <property type="reaction ID" value="UER00311"/>
</dbReference>
<dbReference type="Proteomes" id="UP000000662">
    <property type="component" value="Chromosome 1"/>
</dbReference>
<dbReference type="GO" id="GO:0005737">
    <property type="term" value="C:cytoplasm"/>
    <property type="evidence" value="ECO:0007669"/>
    <property type="project" value="UniProtKB-SubCell"/>
</dbReference>
<dbReference type="GO" id="GO:0004648">
    <property type="term" value="F:O-phospho-L-serine:2-oxoglutarate aminotransferase activity"/>
    <property type="evidence" value="ECO:0007669"/>
    <property type="project" value="UniProtKB-UniRule"/>
</dbReference>
<dbReference type="GO" id="GO:0030170">
    <property type="term" value="F:pyridoxal phosphate binding"/>
    <property type="evidence" value="ECO:0007669"/>
    <property type="project" value="UniProtKB-UniRule"/>
</dbReference>
<dbReference type="GO" id="GO:0006564">
    <property type="term" value="P:L-serine biosynthetic process"/>
    <property type="evidence" value="ECO:0007669"/>
    <property type="project" value="UniProtKB-UniRule"/>
</dbReference>
<dbReference type="GO" id="GO:0008615">
    <property type="term" value="P:pyridoxine biosynthetic process"/>
    <property type="evidence" value="ECO:0007669"/>
    <property type="project" value="UniProtKB-UniRule"/>
</dbReference>
<dbReference type="CDD" id="cd00611">
    <property type="entry name" value="PSAT_like"/>
    <property type="match status" value="1"/>
</dbReference>
<dbReference type="FunFam" id="3.40.640.10:FF:000010">
    <property type="entry name" value="Phosphoserine aminotransferase"/>
    <property type="match status" value="1"/>
</dbReference>
<dbReference type="FunFam" id="3.90.1150.10:FF:000006">
    <property type="entry name" value="Phosphoserine aminotransferase"/>
    <property type="match status" value="1"/>
</dbReference>
<dbReference type="Gene3D" id="3.90.1150.10">
    <property type="entry name" value="Aspartate Aminotransferase, domain 1"/>
    <property type="match status" value="1"/>
</dbReference>
<dbReference type="Gene3D" id="3.40.640.10">
    <property type="entry name" value="Type I PLP-dependent aspartate aminotransferase-like (Major domain)"/>
    <property type="match status" value="1"/>
</dbReference>
<dbReference type="HAMAP" id="MF_00160">
    <property type="entry name" value="SerC_aminotrans_5"/>
    <property type="match status" value="1"/>
</dbReference>
<dbReference type="InterPro" id="IPR000192">
    <property type="entry name" value="Aminotrans_V_dom"/>
</dbReference>
<dbReference type="InterPro" id="IPR020578">
    <property type="entry name" value="Aminotrans_V_PyrdxlP_BS"/>
</dbReference>
<dbReference type="InterPro" id="IPR022278">
    <property type="entry name" value="Pser_aminoTfrase"/>
</dbReference>
<dbReference type="InterPro" id="IPR015424">
    <property type="entry name" value="PyrdxlP-dep_Trfase"/>
</dbReference>
<dbReference type="InterPro" id="IPR015421">
    <property type="entry name" value="PyrdxlP-dep_Trfase_major"/>
</dbReference>
<dbReference type="InterPro" id="IPR015422">
    <property type="entry name" value="PyrdxlP-dep_Trfase_small"/>
</dbReference>
<dbReference type="NCBIfam" id="NF003764">
    <property type="entry name" value="PRK05355.1"/>
    <property type="match status" value="1"/>
</dbReference>
<dbReference type="NCBIfam" id="TIGR01364">
    <property type="entry name" value="serC_1"/>
    <property type="match status" value="1"/>
</dbReference>
<dbReference type="PANTHER" id="PTHR43247">
    <property type="entry name" value="PHOSPHOSERINE AMINOTRANSFERASE"/>
    <property type="match status" value="1"/>
</dbReference>
<dbReference type="PANTHER" id="PTHR43247:SF1">
    <property type="entry name" value="PHOSPHOSERINE AMINOTRANSFERASE"/>
    <property type="match status" value="1"/>
</dbReference>
<dbReference type="Pfam" id="PF00266">
    <property type="entry name" value="Aminotran_5"/>
    <property type="match status" value="1"/>
</dbReference>
<dbReference type="PIRSF" id="PIRSF000525">
    <property type="entry name" value="SerC"/>
    <property type="match status" value="1"/>
</dbReference>
<dbReference type="SUPFAM" id="SSF53383">
    <property type="entry name" value="PLP-dependent transferases"/>
    <property type="match status" value="1"/>
</dbReference>
<dbReference type="PROSITE" id="PS00595">
    <property type="entry name" value="AA_TRANSFER_CLASS_5"/>
    <property type="match status" value="1"/>
</dbReference>
<keyword id="KW-0028">Amino-acid biosynthesis</keyword>
<keyword id="KW-0032">Aminotransferase</keyword>
<keyword id="KW-0963">Cytoplasm</keyword>
<keyword id="KW-0663">Pyridoxal phosphate</keyword>
<keyword id="KW-0664">Pyridoxine biosynthesis</keyword>
<keyword id="KW-0718">Serine biosynthesis</keyword>
<keyword id="KW-0808">Transferase</keyword>
<gene>
    <name evidence="1" type="primary">serC</name>
    <name type="ordered locus">Bamb_0918</name>
</gene>
<accession>Q0BH96</accession>
<proteinExistence type="inferred from homology"/>